<evidence type="ECO:0000255" key="1">
    <source>
        <dbReference type="HAMAP-Rule" id="MF_02111"/>
    </source>
</evidence>
<protein>
    <recommendedName>
        <fullName evidence="1">Pup--protein ligase</fullName>
        <ecNumber evidence="1">6.3.1.19</ecNumber>
    </recommendedName>
    <alternativeName>
        <fullName evidence="1">Proteasome accessory factor A</fullName>
    </alternativeName>
    <alternativeName>
        <fullName evidence="1">Pup-conjugating enzyme</fullName>
    </alternativeName>
</protein>
<proteinExistence type="inferred from homology"/>
<reference key="1">
    <citation type="journal article" date="2002" name="Nature">
        <title>Complete genome sequence of the model actinomycete Streptomyces coelicolor A3(2).</title>
        <authorList>
            <person name="Bentley S.D."/>
            <person name="Chater K.F."/>
            <person name="Cerdeno-Tarraga A.-M."/>
            <person name="Challis G.L."/>
            <person name="Thomson N.R."/>
            <person name="James K.D."/>
            <person name="Harris D.E."/>
            <person name="Quail M.A."/>
            <person name="Kieser H."/>
            <person name="Harper D."/>
            <person name="Bateman A."/>
            <person name="Brown S."/>
            <person name="Chandra G."/>
            <person name="Chen C.W."/>
            <person name="Collins M."/>
            <person name="Cronin A."/>
            <person name="Fraser A."/>
            <person name="Goble A."/>
            <person name="Hidalgo J."/>
            <person name="Hornsby T."/>
            <person name="Howarth S."/>
            <person name="Huang C.-H."/>
            <person name="Kieser T."/>
            <person name="Larke L."/>
            <person name="Murphy L.D."/>
            <person name="Oliver K."/>
            <person name="O'Neil S."/>
            <person name="Rabbinowitsch E."/>
            <person name="Rajandream M.A."/>
            <person name="Rutherford K.M."/>
            <person name="Rutter S."/>
            <person name="Seeger K."/>
            <person name="Saunders D."/>
            <person name="Sharp S."/>
            <person name="Squares R."/>
            <person name="Squares S."/>
            <person name="Taylor K."/>
            <person name="Warren T."/>
            <person name="Wietzorrek A."/>
            <person name="Woodward J.R."/>
            <person name="Barrell B.G."/>
            <person name="Parkhill J."/>
            <person name="Hopwood D.A."/>
        </authorList>
    </citation>
    <scope>NUCLEOTIDE SEQUENCE [LARGE SCALE GENOMIC DNA]</scope>
    <source>
        <strain>ATCC BAA-471 / A3(2) / M145</strain>
    </source>
</reference>
<keyword id="KW-0067">ATP-binding</keyword>
<keyword id="KW-0436">Ligase</keyword>
<keyword id="KW-0460">Magnesium</keyword>
<keyword id="KW-0479">Metal-binding</keyword>
<keyword id="KW-0547">Nucleotide-binding</keyword>
<keyword id="KW-1185">Reference proteome</keyword>
<keyword id="KW-0833">Ubl conjugation pathway</keyword>
<name>PAFA_STRCO</name>
<gene>
    <name evidence="1" type="primary">pafA</name>
    <name type="ordered locus">SCO1640</name>
    <name type="ORF">SCI41.23c</name>
</gene>
<dbReference type="EC" id="6.3.1.19" evidence="1"/>
<dbReference type="EMBL" id="AL939109">
    <property type="protein sequence ID" value="CAB59493.1"/>
    <property type="molecule type" value="Genomic_DNA"/>
</dbReference>
<dbReference type="RefSeq" id="NP_625915.1">
    <property type="nucleotide sequence ID" value="NC_003888.3"/>
</dbReference>
<dbReference type="RefSeq" id="WP_003977186.1">
    <property type="nucleotide sequence ID" value="NZ_VNID01000018.1"/>
</dbReference>
<dbReference type="SMR" id="Q9RJ61"/>
<dbReference type="STRING" id="100226.gene:17759233"/>
<dbReference type="PaxDb" id="100226-SCO1640"/>
<dbReference type="GeneID" id="91387387"/>
<dbReference type="KEGG" id="sco:SCO1640"/>
<dbReference type="PATRIC" id="fig|100226.15.peg.1655"/>
<dbReference type="eggNOG" id="COG0638">
    <property type="taxonomic scope" value="Bacteria"/>
</dbReference>
<dbReference type="HOGENOM" id="CLU_040524_0_1_11"/>
<dbReference type="InParanoid" id="Q9RJ61"/>
<dbReference type="OrthoDB" id="9760627at2"/>
<dbReference type="PhylomeDB" id="Q9RJ61"/>
<dbReference type="BRENDA" id="6.3.1.19">
    <property type="organism ID" value="5998"/>
</dbReference>
<dbReference type="UniPathway" id="UPA00997"/>
<dbReference type="UniPathway" id="UPA00998"/>
<dbReference type="Proteomes" id="UP000001973">
    <property type="component" value="Chromosome"/>
</dbReference>
<dbReference type="GO" id="GO:0005524">
    <property type="term" value="F:ATP binding"/>
    <property type="evidence" value="ECO:0000318"/>
    <property type="project" value="GO_Central"/>
</dbReference>
<dbReference type="GO" id="GO:0016879">
    <property type="term" value="F:ligase activity, forming carbon-nitrogen bonds"/>
    <property type="evidence" value="ECO:0007669"/>
    <property type="project" value="InterPro"/>
</dbReference>
<dbReference type="GO" id="GO:0000287">
    <property type="term" value="F:magnesium ion binding"/>
    <property type="evidence" value="ECO:0007669"/>
    <property type="project" value="UniProtKB-UniRule"/>
</dbReference>
<dbReference type="GO" id="GO:0019787">
    <property type="term" value="F:ubiquitin-like protein transferase activity"/>
    <property type="evidence" value="ECO:0007669"/>
    <property type="project" value="UniProtKB-UniRule"/>
</dbReference>
<dbReference type="GO" id="GO:0019941">
    <property type="term" value="P:modification-dependent protein catabolic process"/>
    <property type="evidence" value="ECO:0000318"/>
    <property type="project" value="GO_Central"/>
</dbReference>
<dbReference type="GO" id="GO:0010498">
    <property type="term" value="P:proteasomal protein catabolic process"/>
    <property type="evidence" value="ECO:0000318"/>
    <property type="project" value="GO_Central"/>
</dbReference>
<dbReference type="GO" id="GO:0070490">
    <property type="term" value="P:protein pupylation"/>
    <property type="evidence" value="ECO:0000318"/>
    <property type="project" value="GO_Central"/>
</dbReference>
<dbReference type="HAMAP" id="MF_02111">
    <property type="entry name" value="Pup_ligase"/>
    <property type="match status" value="1"/>
</dbReference>
<dbReference type="InterPro" id="IPR022279">
    <property type="entry name" value="Pup_ligase"/>
</dbReference>
<dbReference type="InterPro" id="IPR004347">
    <property type="entry name" value="Pup_ligase/deamidase"/>
</dbReference>
<dbReference type="NCBIfam" id="TIGR03686">
    <property type="entry name" value="pupylate_PafA"/>
    <property type="match status" value="1"/>
</dbReference>
<dbReference type="PANTHER" id="PTHR42307">
    <property type="entry name" value="PUP DEAMIDASE/DEPUPYLASE"/>
    <property type="match status" value="1"/>
</dbReference>
<dbReference type="PANTHER" id="PTHR42307:SF3">
    <property type="entry name" value="PUP--PROTEIN LIGASE"/>
    <property type="match status" value="1"/>
</dbReference>
<dbReference type="Pfam" id="PF03136">
    <property type="entry name" value="Pup_ligase"/>
    <property type="match status" value="1"/>
</dbReference>
<dbReference type="PIRSF" id="PIRSF018077">
    <property type="entry name" value="UCP018077"/>
    <property type="match status" value="1"/>
</dbReference>
<organism>
    <name type="scientific">Streptomyces coelicolor (strain ATCC BAA-471 / A3(2) / M145)</name>
    <dbReference type="NCBI Taxonomy" id="100226"/>
    <lineage>
        <taxon>Bacteria</taxon>
        <taxon>Bacillati</taxon>
        <taxon>Actinomycetota</taxon>
        <taxon>Actinomycetes</taxon>
        <taxon>Kitasatosporales</taxon>
        <taxon>Streptomycetaceae</taxon>
        <taxon>Streptomyces</taxon>
        <taxon>Streptomyces albidoflavus group</taxon>
    </lineage>
</organism>
<comment type="function">
    <text evidence="1">Catalyzes the covalent attachment of the prokaryotic ubiquitin-like protein modifier Pup to the proteasomal substrate proteins, thereby targeting them for proteasomal degradation. This tagging system is termed pupylation. The ligation reaction involves the side-chain carboxylate of the C-terminal glutamate of Pup and the side-chain amino group of a substrate lysine.</text>
</comment>
<comment type="catalytic activity">
    <reaction evidence="1">
        <text>ATP + [prokaryotic ubiquitin-like protein]-L-glutamate + [protein]-L-lysine = ADP + phosphate + N(6)-([prokaryotic ubiquitin-like protein]-gamma-L-glutamyl)-[protein]-L-lysine.</text>
        <dbReference type="EC" id="6.3.1.19"/>
    </reaction>
</comment>
<comment type="pathway">
    <text evidence="1">Protein degradation; proteasomal Pup-dependent pathway.</text>
</comment>
<comment type="pathway">
    <text evidence="1">Protein modification; protein pupylation.</text>
</comment>
<comment type="miscellaneous">
    <text evidence="1">The reaction mechanism probably proceeds via the activation of Pup by phosphorylation of its C-terminal glutamate, which is then subject to nucleophilic attack by the substrate lysine, resulting in an isopeptide bond and the release of phosphate as a good leaving group.</text>
</comment>
<comment type="similarity">
    <text evidence="1">Belongs to the Pup ligase/Pup deamidase family. Pup-conjugating enzyme subfamily.</text>
</comment>
<accession>Q9RJ61</accession>
<feature type="chain" id="PRO_0000395956" description="Pup--protein ligase">
    <location>
        <begin position="1"/>
        <end position="453"/>
    </location>
</feature>
<feature type="active site" description="Proton acceptor" evidence="1">
    <location>
        <position position="57"/>
    </location>
</feature>
<feature type="binding site" evidence="1">
    <location>
        <position position="9"/>
    </location>
    <ligand>
        <name>Mg(2+)</name>
        <dbReference type="ChEBI" id="CHEBI:18420"/>
    </ligand>
</feature>
<feature type="binding site" evidence="1">
    <location>
        <position position="53"/>
    </location>
    <ligand>
        <name>ATP</name>
        <dbReference type="ChEBI" id="CHEBI:30616"/>
    </ligand>
</feature>
<feature type="binding site" evidence="1">
    <location>
        <position position="55"/>
    </location>
    <ligand>
        <name>Mg(2+)</name>
        <dbReference type="ChEBI" id="CHEBI:18420"/>
    </ligand>
</feature>
<feature type="binding site" evidence="1">
    <location>
        <position position="63"/>
    </location>
    <ligand>
        <name>Mg(2+)</name>
        <dbReference type="ChEBI" id="CHEBI:18420"/>
    </ligand>
</feature>
<feature type="binding site" evidence="1">
    <location>
        <position position="66"/>
    </location>
    <ligand>
        <name>ATP</name>
        <dbReference type="ChEBI" id="CHEBI:30616"/>
    </ligand>
</feature>
<feature type="binding site" evidence="1">
    <location>
        <position position="420"/>
    </location>
    <ligand>
        <name>ATP</name>
        <dbReference type="ChEBI" id="CHEBI:30616"/>
    </ligand>
</feature>
<sequence length="453" mass="52096">MDRRIFGLENEYGVTCTFRGQRRLSPDEVARYLFRRVVSWGRSSNVFLRNGARLYLDVGSHPEYATPECDNVTELVTHDKAGERILEGLLVDAERRLHEEGIAGDVYLFKNNTDSAGNSYGCHENYLVARHGEFSRLADILIPFLVTRQLLCGAGKVLQTPRGAVYCVSQRAEHIWEGVSSATTRSRPIINTRDEPHADAERYRRLHVIVGDSNMSETTMLLKVGATDLVLRMIEAGTVMRDLTLENPIRAIREVSHDITGRRKVRLASGREASALEVQREYYEKAVDFCERRGIRTGTVERVLELWGRTLDAIEAEDLDRIGTEIDWVMKYKLLERYRAKHNMTMSHPRVAQIDLAYHDIHRRRGLYYLLEKKGQAARVANDLKIFEGKSVPPQTTRARLRGDFIRRAQEQRRDFTVDWVHLKLNDQAQRTVLCKDPFRSVDDRVEKLIAGM</sequence>